<name>Y568_RICBR</name>
<proteinExistence type="inferred from homology"/>
<gene>
    <name type="ordered locus">RBE_0568</name>
</gene>
<comment type="subcellular location">
    <subcellularLocation>
        <location evidence="1">Cytoplasm</location>
    </subcellularLocation>
</comment>
<comment type="similarity">
    <text evidence="1">Belongs to the TACO1 family.</text>
</comment>
<keyword id="KW-0963">Cytoplasm</keyword>
<keyword id="KW-0238">DNA-binding</keyword>
<keyword id="KW-0804">Transcription</keyword>
<keyword id="KW-0805">Transcription regulation</keyword>
<feature type="chain" id="PRO_0000257120" description="Probable transcriptional regulatory protein RBE_0568">
    <location>
        <begin position="1"/>
        <end position="253"/>
    </location>
</feature>
<feature type="region of interest" description="Disordered" evidence="2">
    <location>
        <begin position="1"/>
        <end position="21"/>
    </location>
</feature>
<accession>Q1RJ15</accession>
<dbReference type="EMBL" id="CP000087">
    <property type="protein sequence ID" value="ABE04649.1"/>
    <property type="molecule type" value="Genomic_DNA"/>
</dbReference>
<dbReference type="RefSeq" id="WP_011477238.1">
    <property type="nucleotide sequence ID" value="NC_007940.1"/>
</dbReference>
<dbReference type="SMR" id="Q1RJ15"/>
<dbReference type="KEGG" id="rbe:RBE_0568"/>
<dbReference type="eggNOG" id="COG0217">
    <property type="taxonomic scope" value="Bacteria"/>
</dbReference>
<dbReference type="HOGENOM" id="CLU_062974_2_2_5"/>
<dbReference type="OrthoDB" id="9781053at2"/>
<dbReference type="Proteomes" id="UP000001951">
    <property type="component" value="Chromosome"/>
</dbReference>
<dbReference type="GO" id="GO:0005737">
    <property type="term" value="C:cytoplasm"/>
    <property type="evidence" value="ECO:0007669"/>
    <property type="project" value="UniProtKB-SubCell"/>
</dbReference>
<dbReference type="GO" id="GO:0003677">
    <property type="term" value="F:DNA binding"/>
    <property type="evidence" value="ECO:0007669"/>
    <property type="project" value="UniProtKB-UniRule"/>
</dbReference>
<dbReference type="GO" id="GO:0006355">
    <property type="term" value="P:regulation of DNA-templated transcription"/>
    <property type="evidence" value="ECO:0007669"/>
    <property type="project" value="UniProtKB-UniRule"/>
</dbReference>
<dbReference type="FunFam" id="1.10.10.200:FF:000002">
    <property type="entry name" value="Probable transcriptional regulatory protein CLM62_37755"/>
    <property type="match status" value="1"/>
</dbReference>
<dbReference type="Gene3D" id="1.10.10.200">
    <property type="match status" value="1"/>
</dbReference>
<dbReference type="Gene3D" id="3.30.70.980">
    <property type="match status" value="2"/>
</dbReference>
<dbReference type="HAMAP" id="MF_00693">
    <property type="entry name" value="Transcrip_reg_TACO1"/>
    <property type="match status" value="1"/>
</dbReference>
<dbReference type="InterPro" id="IPR017856">
    <property type="entry name" value="Integrase-like_N"/>
</dbReference>
<dbReference type="InterPro" id="IPR048300">
    <property type="entry name" value="TACO1_YebC-like_2nd/3rd_dom"/>
</dbReference>
<dbReference type="InterPro" id="IPR049083">
    <property type="entry name" value="TACO1_YebC_N"/>
</dbReference>
<dbReference type="InterPro" id="IPR002876">
    <property type="entry name" value="Transcrip_reg_TACO1-like"/>
</dbReference>
<dbReference type="InterPro" id="IPR026564">
    <property type="entry name" value="Transcrip_reg_TACO1-like_dom3"/>
</dbReference>
<dbReference type="InterPro" id="IPR029072">
    <property type="entry name" value="YebC-like"/>
</dbReference>
<dbReference type="NCBIfam" id="NF001030">
    <property type="entry name" value="PRK00110.1"/>
    <property type="match status" value="1"/>
</dbReference>
<dbReference type="NCBIfam" id="NF009044">
    <property type="entry name" value="PRK12378.1"/>
    <property type="match status" value="1"/>
</dbReference>
<dbReference type="NCBIfam" id="TIGR01033">
    <property type="entry name" value="YebC/PmpR family DNA-binding transcriptional regulator"/>
    <property type="match status" value="1"/>
</dbReference>
<dbReference type="PANTHER" id="PTHR12532:SF11">
    <property type="match status" value="1"/>
</dbReference>
<dbReference type="PANTHER" id="PTHR12532">
    <property type="entry name" value="TRANSLATIONAL ACTIVATOR OF CYTOCHROME C OXIDASE 1"/>
    <property type="match status" value="1"/>
</dbReference>
<dbReference type="Pfam" id="PF20772">
    <property type="entry name" value="TACO1_YebC_N"/>
    <property type="match status" value="1"/>
</dbReference>
<dbReference type="Pfam" id="PF01709">
    <property type="entry name" value="Transcrip_reg"/>
    <property type="match status" value="1"/>
</dbReference>
<dbReference type="SUPFAM" id="SSF75625">
    <property type="entry name" value="YebC-like"/>
    <property type="match status" value="1"/>
</dbReference>
<protein>
    <recommendedName>
        <fullName evidence="1">Probable transcriptional regulatory protein RBE_0568</fullName>
    </recommendedName>
</protein>
<organism>
    <name type="scientific">Rickettsia bellii (strain RML369-C)</name>
    <dbReference type="NCBI Taxonomy" id="336407"/>
    <lineage>
        <taxon>Bacteria</taxon>
        <taxon>Pseudomonadati</taxon>
        <taxon>Pseudomonadota</taxon>
        <taxon>Alphaproteobacteria</taxon>
        <taxon>Rickettsiales</taxon>
        <taxon>Rickettsiaceae</taxon>
        <taxon>Rickettsieae</taxon>
        <taxon>Rickettsia</taxon>
        <taxon>belli group</taxon>
    </lineage>
</organism>
<sequence length="253" mass="28181">MAGHSKFKNIQHRKGAQDKKRAKVFTKLIREIVTAVKAGSTNPDNNPRLRTALATARSQNLPKERIDKAINSANDSANNENYTEIRYEGYAPGGIAIIVEALTDNKNRTAAEVRSSFTKYGGNLGETGSVNFLFKHCGVIQYPLEISSAENILETAIEAGTDDIVSDEVLHTIYTDIENFSKVLEFLTDKYGTAEEAYIGWVPLNTIIIDDKEKAEKLLKLVDLLEESDDVQRVFGNYELSDEIYEILQGSDE</sequence>
<evidence type="ECO:0000255" key="1">
    <source>
        <dbReference type="HAMAP-Rule" id="MF_00693"/>
    </source>
</evidence>
<evidence type="ECO:0000256" key="2">
    <source>
        <dbReference type="SAM" id="MobiDB-lite"/>
    </source>
</evidence>
<reference key="1">
    <citation type="journal article" date="2006" name="PLoS Genet.">
        <title>Genome sequence of Rickettsia bellii illuminates the role of amoebae in gene exchanges between intracellular pathogens.</title>
        <authorList>
            <person name="Ogata H."/>
            <person name="La Scola B."/>
            <person name="Audic S."/>
            <person name="Renesto P."/>
            <person name="Blanc G."/>
            <person name="Robert C."/>
            <person name="Fournier P.-E."/>
            <person name="Claverie J.-M."/>
            <person name="Raoult D."/>
        </authorList>
    </citation>
    <scope>NUCLEOTIDE SEQUENCE [LARGE SCALE GENOMIC DNA]</scope>
    <source>
        <strain>RML369-C</strain>
    </source>
</reference>